<sequence length="518" mass="56277">MTRSIAAAYRAGELPAFFRLPAGDLAAAASEPRLDVDRAALADALRAYHRDLGTLDSGVEAQLTRLAHPASRVVVTGQQAGLLTGPAYSVHKGADAALLARQLDREDAPVIPVYWVASQDHDAAEVASTTLLDHAEELHRLTLDLPQGVPVGRVPWQPEWTAAVLKLLDRFDTAPEYRAAVRARVEQAIRGGGSFADVFARLIHGLLAPTGLLVLDPLHPALAHLMAPTLARELACPLEGPARIEAAARRLEAVGFPPQLRRPAGATNLFLEEEDGQRRLLRFDGRQFHTDTRLYTREELLAVLEAGPTRLTPAAGLRPVVQDALLPTLAFVVGPGEIAYGAQLREVYELHGLRQPLLWPRLSVTWLEPNVVRLLSRLQATAAEVQADPEGVLGRALARERGAAAASAERLAALDAELRALTAELAALDPTLEGAAERTRARTTARVAHLQTLALRALARQEDERARQLTRLKRHLLPNGVPQEREMNFLTFLLKHGEEPLRKLLSLPPGAQAEVPLS</sequence>
<accession>Q1IYW2</accession>
<comment type="similarity">
    <text evidence="1">Belongs to the BshC family.</text>
</comment>
<proteinExistence type="inferred from homology"/>
<evidence type="ECO:0000255" key="1">
    <source>
        <dbReference type="HAMAP-Rule" id="MF_01867"/>
    </source>
</evidence>
<organism>
    <name type="scientific">Deinococcus geothermalis (strain DSM 11300 / CIP 105573 / AG-3a)</name>
    <dbReference type="NCBI Taxonomy" id="319795"/>
    <lineage>
        <taxon>Bacteria</taxon>
        <taxon>Thermotogati</taxon>
        <taxon>Deinococcota</taxon>
        <taxon>Deinococci</taxon>
        <taxon>Deinococcales</taxon>
        <taxon>Deinococcaceae</taxon>
        <taxon>Deinococcus</taxon>
    </lineage>
</organism>
<protein>
    <recommendedName>
        <fullName evidence="1">Putative cysteine ligase BshC</fullName>
        <ecNumber evidence="1">6.-.-.-</ecNumber>
    </recommendedName>
</protein>
<reference key="1">
    <citation type="submission" date="2006-04" db="EMBL/GenBank/DDBJ databases">
        <title>Complete sequence of chromosome of Deinococcus geothermalis DSM 11300.</title>
        <authorList>
            <person name="Copeland A."/>
            <person name="Lucas S."/>
            <person name="Lapidus A."/>
            <person name="Barry K."/>
            <person name="Detter J.C."/>
            <person name="Glavina del Rio T."/>
            <person name="Hammon N."/>
            <person name="Israni S."/>
            <person name="Dalin E."/>
            <person name="Tice H."/>
            <person name="Pitluck S."/>
            <person name="Brettin T."/>
            <person name="Bruce D."/>
            <person name="Han C."/>
            <person name="Tapia R."/>
            <person name="Saunders E."/>
            <person name="Gilna P."/>
            <person name="Schmutz J."/>
            <person name="Larimer F."/>
            <person name="Land M."/>
            <person name="Hauser L."/>
            <person name="Kyrpides N."/>
            <person name="Kim E."/>
            <person name="Daly M.J."/>
            <person name="Fredrickson J.K."/>
            <person name="Makarova K.S."/>
            <person name="Gaidamakova E.K."/>
            <person name="Zhai M."/>
            <person name="Richardson P."/>
        </authorList>
    </citation>
    <scope>NUCLEOTIDE SEQUENCE [LARGE SCALE GENOMIC DNA]</scope>
    <source>
        <strain>DSM 11300 / CIP 105573 / AG-3a</strain>
    </source>
</reference>
<feature type="chain" id="PRO_0000378233" description="Putative cysteine ligase BshC">
    <location>
        <begin position="1"/>
        <end position="518"/>
    </location>
</feature>
<feature type="coiled-coil region" evidence="1">
    <location>
        <begin position="404"/>
        <end position="474"/>
    </location>
</feature>
<keyword id="KW-0175">Coiled coil</keyword>
<keyword id="KW-0436">Ligase</keyword>
<dbReference type="EC" id="6.-.-.-" evidence="1"/>
<dbReference type="EMBL" id="CP000359">
    <property type="protein sequence ID" value="ABF45572.1"/>
    <property type="molecule type" value="Genomic_DNA"/>
</dbReference>
<dbReference type="RefSeq" id="WP_011530409.1">
    <property type="nucleotide sequence ID" value="NC_008025.1"/>
</dbReference>
<dbReference type="SMR" id="Q1IYW2"/>
<dbReference type="STRING" id="319795.Dgeo_1276"/>
<dbReference type="KEGG" id="dge:Dgeo_1276"/>
<dbReference type="eggNOG" id="COG4365">
    <property type="taxonomic scope" value="Bacteria"/>
</dbReference>
<dbReference type="HOGENOM" id="CLU_022249_1_0_0"/>
<dbReference type="Proteomes" id="UP000002431">
    <property type="component" value="Chromosome"/>
</dbReference>
<dbReference type="GO" id="GO:0016874">
    <property type="term" value="F:ligase activity"/>
    <property type="evidence" value="ECO:0007669"/>
    <property type="project" value="UniProtKB-UniRule"/>
</dbReference>
<dbReference type="HAMAP" id="MF_01867">
    <property type="entry name" value="BshC"/>
    <property type="match status" value="1"/>
</dbReference>
<dbReference type="InterPro" id="IPR011199">
    <property type="entry name" value="Bacillithiol_biosynth_BshC"/>
</dbReference>
<dbReference type="InterPro" id="IPR055399">
    <property type="entry name" value="CC_BshC"/>
</dbReference>
<dbReference type="InterPro" id="IPR055398">
    <property type="entry name" value="Rossmann-like_BshC"/>
</dbReference>
<dbReference type="NCBIfam" id="TIGR03998">
    <property type="entry name" value="thiol_BshC"/>
    <property type="match status" value="1"/>
</dbReference>
<dbReference type="Pfam" id="PF24850">
    <property type="entry name" value="CC_BshC"/>
    <property type="match status" value="1"/>
</dbReference>
<dbReference type="Pfam" id="PF10079">
    <property type="entry name" value="Rossmann-like_BshC"/>
    <property type="match status" value="1"/>
</dbReference>
<dbReference type="PIRSF" id="PIRSF012535">
    <property type="entry name" value="UCP012535"/>
    <property type="match status" value="1"/>
</dbReference>
<name>BSHC_DEIGD</name>
<gene>
    <name evidence="1" type="primary">bshC</name>
    <name type="ordered locus">Dgeo_1276</name>
</gene>